<comment type="function">
    <text evidence="1">One of several proteins that assist in the late maturation steps of the functional core of the 30S ribosomal subunit. Helps release RbfA from mature subunits. May play a role in the assembly of ribosomal proteins into the subunit. Circularly permuted GTPase that catalyzes slow GTP hydrolysis, GTPase activity is stimulated by the 30S ribosomal subunit.</text>
</comment>
<comment type="cofactor">
    <cofactor evidence="1">
        <name>Zn(2+)</name>
        <dbReference type="ChEBI" id="CHEBI:29105"/>
    </cofactor>
    <text evidence="1">Binds 1 zinc ion per subunit.</text>
</comment>
<comment type="subunit">
    <text evidence="1">Monomer. Associates with 30S ribosomal subunit, binds 16S rRNA.</text>
</comment>
<comment type="subcellular location">
    <subcellularLocation>
        <location evidence="1">Cytoplasm</location>
    </subcellularLocation>
</comment>
<comment type="similarity">
    <text evidence="1">Belongs to the TRAFAC class YlqF/YawG GTPase family. RsgA subfamily.</text>
</comment>
<accession>B2THS4</accession>
<proteinExistence type="inferred from homology"/>
<reference key="1">
    <citation type="submission" date="2008-04" db="EMBL/GenBank/DDBJ databases">
        <title>Complete sequence of Clostridium botulinum strain Eklund.</title>
        <authorList>
            <person name="Brinkac L.M."/>
            <person name="Brown J.L."/>
            <person name="Bruce D."/>
            <person name="Detter C."/>
            <person name="Munk C."/>
            <person name="Smith L.A."/>
            <person name="Smith T.J."/>
            <person name="Sutton G."/>
            <person name="Brettin T.S."/>
        </authorList>
    </citation>
    <scope>NUCLEOTIDE SEQUENCE [LARGE SCALE GENOMIC DNA]</scope>
    <source>
        <strain>Eklund 17B / Type B</strain>
    </source>
</reference>
<organism>
    <name type="scientific">Clostridium botulinum (strain Eklund 17B / Type B)</name>
    <dbReference type="NCBI Taxonomy" id="935198"/>
    <lineage>
        <taxon>Bacteria</taxon>
        <taxon>Bacillati</taxon>
        <taxon>Bacillota</taxon>
        <taxon>Clostridia</taxon>
        <taxon>Eubacteriales</taxon>
        <taxon>Clostridiaceae</taxon>
        <taxon>Clostridium</taxon>
    </lineage>
</organism>
<dbReference type="EC" id="3.6.1.-" evidence="1"/>
<dbReference type="EMBL" id="CP001056">
    <property type="protein sequence ID" value="ACD22601.1"/>
    <property type="molecule type" value="Genomic_DNA"/>
</dbReference>
<dbReference type="SMR" id="B2THS4"/>
<dbReference type="KEGG" id="cbk:CLL_A1222"/>
<dbReference type="PATRIC" id="fig|935198.13.peg.1167"/>
<dbReference type="HOGENOM" id="CLU_033617_2_1_9"/>
<dbReference type="Proteomes" id="UP000001195">
    <property type="component" value="Chromosome"/>
</dbReference>
<dbReference type="GO" id="GO:0005737">
    <property type="term" value="C:cytoplasm"/>
    <property type="evidence" value="ECO:0007669"/>
    <property type="project" value="UniProtKB-SubCell"/>
</dbReference>
<dbReference type="GO" id="GO:0005525">
    <property type="term" value="F:GTP binding"/>
    <property type="evidence" value="ECO:0007669"/>
    <property type="project" value="UniProtKB-UniRule"/>
</dbReference>
<dbReference type="GO" id="GO:0003924">
    <property type="term" value="F:GTPase activity"/>
    <property type="evidence" value="ECO:0007669"/>
    <property type="project" value="UniProtKB-UniRule"/>
</dbReference>
<dbReference type="GO" id="GO:0046872">
    <property type="term" value="F:metal ion binding"/>
    <property type="evidence" value="ECO:0007669"/>
    <property type="project" value="UniProtKB-KW"/>
</dbReference>
<dbReference type="GO" id="GO:0019843">
    <property type="term" value="F:rRNA binding"/>
    <property type="evidence" value="ECO:0007669"/>
    <property type="project" value="UniProtKB-KW"/>
</dbReference>
<dbReference type="GO" id="GO:0042274">
    <property type="term" value="P:ribosomal small subunit biogenesis"/>
    <property type="evidence" value="ECO:0007669"/>
    <property type="project" value="UniProtKB-UniRule"/>
</dbReference>
<dbReference type="CDD" id="cd04466">
    <property type="entry name" value="S1_YloQ_GTPase"/>
    <property type="match status" value="1"/>
</dbReference>
<dbReference type="CDD" id="cd01854">
    <property type="entry name" value="YjeQ_EngC"/>
    <property type="match status" value="1"/>
</dbReference>
<dbReference type="Gene3D" id="2.40.50.140">
    <property type="entry name" value="Nucleic acid-binding proteins"/>
    <property type="match status" value="1"/>
</dbReference>
<dbReference type="Gene3D" id="3.40.50.300">
    <property type="entry name" value="P-loop containing nucleotide triphosphate hydrolases"/>
    <property type="match status" value="1"/>
</dbReference>
<dbReference type="Gene3D" id="1.10.40.50">
    <property type="entry name" value="Probable gtpase engc, domain 3"/>
    <property type="match status" value="1"/>
</dbReference>
<dbReference type="HAMAP" id="MF_01820">
    <property type="entry name" value="GTPase_RsgA"/>
    <property type="match status" value="1"/>
</dbReference>
<dbReference type="InterPro" id="IPR030378">
    <property type="entry name" value="G_CP_dom"/>
</dbReference>
<dbReference type="InterPro" id="IPR012340">
    <property type="entry name" value="NA-bd_OB-fold"/>
</dbReference>
<dbReference type="InterPro" id="IPR027417">
    <property type="entry name" value="P-loop_NTPase"/>
</dbReference>
<dbReference type="InterPro" id="IPR004881">
    <property type="entry name" value="Ribosome_biogen_GTPase_RsgA"/>
</dbReference>
<dbReference type="InterPro" id="IPR010914">
    <property type="entry name" value="RsgA_GTPase_dom"/>
</dbReference>
<dbReference type="InterPro" id="IPR031944">
    <property type="entry name" value="RsgA_N"/>
</dbReference>
<dbReference type="NCBIfam" id="TIGR00157">
    <property type="entry name" value="ribosome small subunit-dependent GTPase A"/>
    <property type="match status" value="1"/>
</dbReference>
<dbReference type="PANTHER" id="PTHR32120">
    <property type="entry name" value="SMALL RIBOSOMAL SUBUNIT BIOGENESIS GTPASE RSGA"/>
    <property type="match status" value="1"/>
</dbReference>
<dbReference type="PANTHER" id="PTHR32120:SF11">
    <property type="entry name" value="SMALL RIBOSOMAL SUBUNIT BIOGENESIS GTPASE RSGA 1, MITOCHONDRIAL-RELATED"/>
    <property type="match status" value="1"/>
</dbReference>
<dbReference type="Pfam" id="PF03193">
    <property type="entry name" value="RsgA_GTPase"/>
    <property type="match status" value="1"/>
</dbReference>
<dbReference type="Pfam" id="PF16745">
    <property type="entry name" value="RsgA_N"/>
    <property type="match status" value="1"/>
</dbReference>
<dbReference type="SUPFAM" id="SSF50249">
    <property type="entry name" value="Nucleic acid-binding proteins"/>
    <property type="match status" value="1"/>
</dbReference>
<dbReference type="SUPFAM" id="SSF52540">
    <property type="entry name" value="P-loop containing nucleoside triphosphate hydrolases"/>
    <property type="match status" value="1"/>
</dbReference>
<dbReference type="PROSITE" id="PS50936">
    <property type="entry name" value="ENGC_GTPASE"/>
    <property type="match status" value="1"/>
</dbReference>
<dbReference type="PROSITE" id="PS51721">
    <property type="entry name" value="G_CP"/>
    <property type="match status" value="1"/>
</dbReference>
<protein>
    <recommendedName>
        <fullName evidence="1">Small ribosomal subunit biogenesis GTPase RsgA</fullName>
        <ecNumber evidence="1">3.6.1.-</ecNumber>
    </recommendedName>
</protein>
<name>RSGA_CLOBB</name>
<keyword id="KW-0963">Cytoplasm</keyword>
<keyword id="KW-0342">GTP-binding</keyword>
<keyword id="KW-0378">Hydrolase</keyword>
<keyword id="KW-0479">Metal-binding</keyword>
<keyword id="KW-0547">Nucleotide-binding</keyword>
<keyword id="KW-0690">Ribosome biogenesis</keyword>
<keyword id="KW-0694">RNA-binding</keyword>
<keyword id="KW-0699">rRNA-binding</keyword>
<keyword id="KW-0862">Zinc</keyword>
<gene>
    <name evidence="1" type="primary">rsgA</name>
    <name type="ordered locus">CLL_A1222</name>
</gene>
<feature type="chain" id="PRO_1000188047" description="Small ribosomal subunit biogenesis GTPase RsgA">
    <location>
        <begin position="1"/>
        <end position="290"/>
    </location>
</feature>
<feature type="domain" description="CP-type G" evidence="2">
    <location>
        <begin position="61"/>
        <end position="218"/>
    </location>
</feature>
<feature type="binding site" evidence="1">
    <location>
        <begin position="110"/>
        <end position="113"/>
    </location>
    <ligand>
        <name>GTP</name>
        <dbReference type="ChEBI" id="CHEBI:37565"/>
    </ligand>
</feature>
<feature type="binding site" evidence="1">
    <location>
        <begin position="161"/>
        <end position="169"/>
    </location>
    <ligand>
        <name>GTP</name>
        <dbReference type="ChEBI" id="CHEBI:37565"/>
    </ligand>
</feature>
<feature type="binding site" evidence="1">
    <location>
        <position position="243"/>
    </location>
    <ligand>
        <name>Zn(2+)</name>
        <dbReference type="ChEBI" id="CHEBI:29105"/>
    </ligand>
</feature>
<feature type="binding site" evidence="1">
    <location>
        <position position="248"/>
    </location>
    <ligand>
        <name>Zn(2+)</name>
        <dbReference type="ChEBI" id="CHEBI:29105"/>
    </ligand>
</feature>
<feature type="binding site" evidence="1">
    <location>
        <position position="250"/>
    </location>
    <ligand>
        <name>Zn(2+)</name>
        <dbReference type="ChEBI" id="CHEBI:29105"/>
    </ligand>
</feature>
<feature type="binding site" evidence="1">
    <location>
        <position position="256"/>
    </location>
    <ligand>
        <name>Zn(2+)</name>
        <dbReference type="ChEBI" id="CHEBI:29105"/>
    </ligand>
</feature>
<evidence type="ECO:0000255" key="1">
    <source>
        <dbReference type="HAMAP-Rule" id="MF_01820"/>
    </source>
</evidence>
<evidence type="ECO:0000255" key="2">
    <source>
        <dbReference type="PROSITE-ProRule" id="PRU01058"/>
    </source>
</evidence>
<sequence length="290" mass="32977">MKGKIIKGIAGFYYVKVEENLIECKARGKFRHKDVKPMVGDNVVIQVENGKGVIESIEKRSSELLRPAVANISLAFVVFAIKSPDINFDLLNKFLVLCEYNHIEAIVCLNKVDLVSEEERENVKKRINDIGYEVLYINAKEGLGTDILKEKINGNITVLCGPSGAGKSTLINKLTNKEHMLTGIVSEKIGRGKHTTRHSELIEVSNGYIVDTPGFSTLEIKELMNKEDLKYCFPEFEEHNESCKYRGCLHNKEPKCTVKQAVEEGKINKYRYEFYIKTLEEIIEGEKNKW</sequence>